<reference key="1">
    <citation type="journal article" date="2005" name="J. Bacteriol.">
        <title>Swine and poultry pathogens: the complete genome sequences of two strains of Mycoplasma hyopneumoniae and a strain of Mycoplasma synoviae.</title>
        <authorList>
            <person name="Vasconcelos A.T.R."/>
            <person name="Ferreira H.B."/>
            <person name="Bizarro C.V."/>
            <person name="Bonatto S.L."/>
            <person name="Carvalho M.O."/>
            <person name="Pinto P.M."/>
            <person name="Almeida D.F."/>
            <person name="Almeida L.G.P."/>
            <person name="Almeida R."/>
            <person name="Alves-Junior L."/>
            <person name="Assuncao E.N."/>
            <person name="Azevedo V.A.C."/>
            <person name="Bogo M.R."/>
            <person name="Brigido M.M."/>
            <person name="Brocchi M."/>
            <person name="Burity H.A."/>
            <person name="Camargo A.A."/>
            <person name="Camargo S.S."/>
            <person name="Carepo M.S."/>
            <person name="Carraro D.M."/>
            <person name="de Mattos Cascardo J.C."/>
            <person name="Castro L.A."/>
            <person name="Cavalcanti G."/>
            <person name="Chemale G."/>
            <person name="Collevatti R.G."/>
            <person name="Cunha C.W."/>
            <person name="Dallagiovanna B."/>
            <person name="Dambros B.P."/>
            <person name="Dellagostin O.A."/>
            <person name="Falcao C."/>
            <person name="Fantinatti-Garboggini F."/>
            <person name="Felipe M.S.S."/>
            <person name="Fiorentin L."/>
            <person name="Franco G.R."/>
            <person name="Freitas N.S.A."/>
            <person name="Frias D."/>
            <person name="Grangeiro T.B."/>
            <person name="Grisard E.C."/>
            <person name="Guimaraes C.T."/>
            <person name="Hungria M."/>
            <person name="Jardim S.N."/>
            <person name="Krieger M.A."/>
            <person name="Laurino J.P."/>
            <person name="Lima L.F.A."/>
            <person name="Lopes M.I."/>
            <person name="Loreto E.L.S."/>
            <person name="Madeira H.M.F."/>
            <person name="Manfio G.P."/>
            <person name="Maranhao A.Q."/>
            <person name="Martinkovics C.T."/>
            <person name="Medeiros S.R.B."/>
            <person name="Moreira M.A.M."/>
            <person name="Neiva M."/>
            <person name="Ramalho-Neto C.E."/>
            <person name="Nicolas M.F."/>
            <person name="Oliveira S.C."/>
            <person name="Paixao R.F.C."/>
            <person name="Pedrosa F.O."/>
            <person name="Pena S.D.J."/>
            <person name="Pereira M."/>
            <person name="Pereira-Ferrari L."/>
            <person name="Piffer I."/>
            <person name="Pinto L.S."/>
            <person name="Potrich D.P."/>
            <person name="Salim A.C.M."/>
            <person name="Santos F.R."/>
            <person name="Schmitt R."/>
            <person name="Schneider M.P.C."/>
            <person name="Schrank A."/>
            <person name="Schrank I.S."/>
            <person name="Schuck A.F."/>
            <person name="Seuanez H.N."/>
            <person name="Silva D.W."/>
            <person name="Silva R."/>
            <person name="Silva S.C."/>
            <person name="Soares C.M.A."/>
            <person name="Souza K.R.L."/>
            <person name="Souza R.C."/>
            <person name="Staats C.C."/>
            <person name="Steffens M.B.R."/>
            <person name="Teixeira S.M.R."/>
            <person name="Urmenyi T.P."/>
            <person name="Vainstein M.H."/>
            <person name="Zuccherato L.W."/>
            <person name="Simpson A.J.G."/>
            <person name="Zaha A."/>
        </authorList>
    </citation>
    <scope>NUCLEOTIDE SEQUENCE [LARGE SCALE GENOMIC DNA]</scope>
    <source>
        <strain>7448</strain>
    </source>
</reference>
<sequence>MGKIRKNDTVVVLSGDDKGKQGAVLELIPAKKAAIVKGVNIKTKHRKPSNKNTNGEIITFEAPILLSKLALVAKKATKDKPAIPTRVGFKIENKKKIRIAKKTGKAI</sequence>
<feature type="chain" id="PRO_0000241621" description="Large ribosomal subunit protein uL24">
    <location>
        <begin position="1"/>
        <end position="107"/>
    </location>
</feature>
<comment type="function">
    <text evidence="1">One of two assembly initiator proteins, it binds directly to the 5'-end of the 23S rRNA, where it nucleates assembly of the 50S subunit.</text>
</comment>
<comment type="function">
    <text evidence="1">One of the proteins that surrounds the polypeptide exit tunnel on the outside of the subunit.</text>
</comment>
<comment type="subunit">
    <text evidence="1">Part of the 50S ribosomal subunit.</text>
</comment>
<comment type="similarity">
    <text evidence="1">Belongs to the universal ribosomal protein uL24 family.</text>
</comment>
<keyword id="KW-0687">Ribonucleoprotein</keyword>
<keyword id="KW-0689">Ribosomal protein</keyword>
<keyword id="KW-0694">RNA-binding</keyword>
<keyword id="KW-0699">rRNA-binding</keyword>
<protein>
    <recommendedName>
        <fullName evidence="1">Large ribosomal subunit protein uL24</fullName>
    </recommendedName>
    <alternativeName>
        <fullName evidence="2">50S ribosomal protein L24</fullName>
    </alternativeName>
</protein>
<name>RL24_MESH7</name>
<proteinExistence type="inferred from homology"/>
<gene>
    <name evidence="1" type="primary">rplX</name>
    <name type="ordered locus">MHP7448_0183</name>
</gene>
<accession>Q4A8I2</accession>
<dbReference type="EMBL" id="AE017244">
    <property type="protein sequence ID" value="AAZ53557.1"/>
    <property type="molecule type" value="Genomic_DNA"/>
</dbReference>
<dbReference type="RefSeq" id="WP_011290062.1">
    <property type="nucleotide sequence ID" value="NC_007332.1"/>
</dbReference>
<dbReference type="SMR" id="Q4A8I2"/>
<dbReference type="KEGG" id="mhp:MHP7448_0183"/>
<dbReference type="HOGENOM" id="CLU_093315_2_2_14"/>
<dbReference type="Proteomes" id="UP000000553">
    <property type="component" value="Chromosome"/>
</dbReference>
<dbReference type="GO" id="GO:1990904">
    <property type="term" value="C:ribonucleoprotein complex"/>
    <property type="evidence" value="ECO:0007669"/>
    <property type="project" value="UniProtKB-KW"/>
</dbReference>
<dbReference type="GO" id="GO:0005840">
    <property type="term" value="C:ribosome"/>
    <property type="evidence" value="ECO:0007669"/>
    <property type="project" value="UniProtKB-KW"/>
</dbReference>
<dbReference type="GO" id="GO:0019843">
    <property type="term" value="F:rRNA binding"/>
    <property type="evidence" value="ECO:0007669"/>
    <property type="project" value="UniProtKB-UniRule"/>
</dbReference>
<dbReference type="GO" id="GO:0003735">
    <property type="term" value="F:structural constituent of ribosome"/>
    <property type="evidence" value="ECO:0007669"/>
    <property type="project" value="InterPro"/>
</dbReference>
<dbReference type="GO" id="GO:0006412">
    <property type="term" value="P:translation"/>
    <property type="evidence" value="ECO:0007669"/>
    <property type="project" value="UniProtKB-UniRule"/>
</dbReference>
<dbReference type="CDD" id="cd06089">
    <property type="entry name" value="KOW_RPL26"/>
    <property type="match status" value="1"/>
</dbReference>
<dbReference type="Gene3D" id="2.30.30.30">
    <property type="match status" value="1"/>
</dbReference>
<dbReference type="HAMAP" id="MF_01326_B">
    <property type="entry name" value="Ribosomal_uL24_B"/>
    <property type="match status" value="1"/>
</dbReference>
<dbReference type="InterPro" id="IPR005824">
    <property type="entry name" value="KOW"/>
</dbReference>
<dbReference type="InterPro" id="IPR014722">
    <property type="entry name" value="Rib_uL2_dom2"/>
</dbReference>
<dbReference type="InterPro" id="IPR003256">
    <property type="entry name" value="Ribosomal_uL24"/>
</dbReference>
<dbReference type="InterPro" id="IPR005825">
    <property type="entry name" value="Ribosomal_uL24_CS"/>
</dbReference>
<dbReference type="InterPro" id="IPR041988">
    <property type="entry name" value="Ribosomal_uL24_KOW"/>
</dbReference>
<dbReference type="InterPro" id="IPR008991">
    <property type="entry name" value="Translation_prot_SH3-like_sf"/>
</dbReference>
<dbReference type="NCBIfam" id="TIGR01079">
    <property type="entry name" value="rplX_bact"/>
    <property type="match status" value="1"/>
</dbReference>
<dbReference type="PANTHER" id="PTHR12903">
    <property type="entry name" value="MITOCHONDRIAL RIBOSOMAL PROTEIN L24"/>
    <property type="match status" value="1"/>
</dbReference>
<dbReference type="Pfam" id="PF00467">
    <property type="entry name" value="KOW"/>
    <property type="match status" value="1"/>
</dbReference>
<dbReference type="Pfam" id="PF17136">
    <property type="entry name" value="ribosomal_L24"/>
    <property type="match status" value="1"/>
</dbReference>
<dbReference type="SMART" id="SM00739">
    <property type="entry name" value="KOW"/>
    <property type="match status" value="1"/>
</dbReference>
<dbReference type="SUPFAM" id="SSF50104">
    <property type="entry name" value="Translation proteins SH3-like domain"/>
    <property type="match status" value="1"/>
</dbReference>
<dbReference type="PROSITE" id="PS01108">
    <property type="entry name" value="RIBOSOMAL_L24"/>
    <property type="match status" value="1"/>
</dbReference>
<evidence type="ECO:0000255" key="1">
    <source>
        <dbReference type="HAMAP-Rule" id="MF_01326"/>
    </source>
</evidence>
<evidence type="ECO:0000305" key="2"/>
<organism>
    <name type="scientific">Mesomycoplasma hyopneumoniae (strain 7448)</name>
    <name type="common">Mycoplasma hyopneumoniae</name>
    <dbReference type="NCBI Taxonomy" id="262722"/>
    <lineage>
        <taxon>Bacteria</taxon>
        <taxon>Bacillati</taxon>
        <taxon>Mycoplasmatota</taxon>
        <taxon>Mycoplasmoidales</taxon>
        <taxon>Metamycoplasmataceae</taxon>
        <taxon>Mesomycoplasma</taxon>
    </lineage>
</organism>